<feature type="chain" id="PRO_0000402056" description="Methylthioribose-1-phosphate isomerase">
    <location>
        <begin position="1"/>
        <end position="386"/>
    </location>
</feature>
<feature type="active site" description="Proton donor" evidence="1">
    <location>
        <position position="258"/>
    </location>
</feature>
<feature type="site" description="Transition state stabilizer" evidence="1">
    <location>
        <position position="176"/>
    </location>
</feature>
<sequence>MASALEAIKYDRGRLFIIDQLQLPHVTKFIPIDSSEAGWHAIKAMQVRGAPAIAIVAVLSLAVEMLNLVSENMIPEDGEDVRAYIEQKMDYLVSSRPTAVNLSDSAQKIKLLLDQRARKSGLSGVETAMAFIQHAEQMLARDLADNHSIGEYGATWILKNTRAALEGGNTCVLTHCNTGSLATAGYGTALGIIRRLHEHGRLSRAYCTETRPYNQGARLTAYELVSDKIPATLITDSMAGQLLANPDKKIAAIVVGADRVAANGDTANKIGTYTLAVLAKFHNIKFVVAAPRTTIDMKTKTGNEIIIEERQSSEVTKIRGPCEGDGDHREAVMETIKIAADGIDVWNPAFDVTPAALIDAIVTEVGVETKDSSGQFHLSSLFESMA</sequence>
<reference key="1">
    <citation type="journal article" date="2009" name="Genome Res.">
        <title>Comparative genomic analyses of the human fungal pathogens Coccidioides and their relatives.</title>
        <authorList>
            <person name="Sharpton T.J."/>
            <person name="Stajich J.E."/>
            <person name="Rounsley S.D."/>
            <person name="Gardner M.J."/>
            <person name="Wortman J.R."/>
            <person name="Jordar V.S."/>
            <person name="Maiti R."/>
            <person name="Kodira C.D."/>
            <person name="Neafsey D.E."/>
            <person name="Zeng Q."/>
            <person name="Hung C.-Y."/>
            <person name="McMahan C."/>
            <person name="Muszewska A."/>
            <person name="Grynberg M."/>
            <person name="Mandel M.A."/>
            <person name="Kellner E.M."/>
            <person name="Barker B.M."/>
            <person name="Galgiani J.N."/>
            <person name="Orbach M.J."/>
            <person name="Kirkland T.N."/>
            <person name="Cole G.T."/>
            <person name="Henn M.R."/>
            <person name="Birren B.W."/>
            <person name="Taylor J.W."/>
        </authorList>
    </citation>
    <scope>NUCLEOTIDE SEQUENCE [LARGE SCALE GENOMIC DNA]</scope>
    <source>
        <strain>UAMH 1704</strain>
    </source>
</reference>
<protein>
    <recommendedName>
        <fullName evidence="1">Methylthioribose-1-phosphate isomerase</fullName>
        <shortName evidence="1">M1Pi</shortName>
        <shortName evidence="1">MTR-1-P isomerase</shortName>
        <ecNumber evidence="1">5.3.1.23</ecNumber>
    </recommendedName>
    <alternativeName>
        <fullName evidence="1">S-methyl-5-thioribose-1-phosphate isomerase</fullName>
    </alternativeName>
    <alternativeName>
        <fullName evidence="1">Translation initiation factor eIF-2B subunit alpha/beta/delta-like protein</fullName>
    </alternativeName>
</protein>
<evidence type="ECO:0000255" key="1">
    <source>
        <dbReference type="HAMAP-Rule" id="MF_03119"/>
    </source>
</evidence>
<gene>
    <name evidence="1" type="primary">MRI1</name>
    <name type="ORF">UREG_06999</name>
</gene>
<proteinExistence type="inferred from homology"/>
<comment type="function">
    <text evidence="1">Catalyzes the interconversion of methylthioribose-1-phosphate (MTR-1-P) into methylthioribulose-1-phosphate (MTRu-1-P).</text>
</comment>
<comment type="catalytic activity">
    <reaction evidence="1">
        <text>5-(methylsulfanyl)-alpha-D-ribose 1-phosphate = 5-(methylsulfanyl)-D-ribulose 1-phosphate</text>
        <dbReference type="Rhea" id="RHEA:19989"/>
        <dbReference type="ChEBI" id="CHEBI:58533"/>
        <dbReference type="ChEBI" id="CHEBI:58548"/>
        <dbReference type="EC" id="5.3.1.23"/>
    </reaction>
</comment>
<comment type="pathway">
    <text evidence="1">Amino-acid biosynthesis; L-methionine biosynthesis via salvage pathway; L-methionine from S-methyl-5-thio-alpha-D-ribose 1-phosphate: step 1/6.</text>
</comment>
<comment type="subcellular location">
    <subcellularLocation>
        <location evidence="1">Cytoplasm</location>
    </subcellularLocation>
    <subcellularLocation>
        <location evidence="1">Nucleus</location>
    </subcellularLocation>
</comment>
<comment type="similarity">
    <text evidence="1">Belongs to the eIF-2B alpha/beta/delta subunits family. MtnA subfamily.</text>
</comment>
<keyword id="KW-0028">Amino-acid biosynthesis</keyword>
<keyword id="KW-0963">Cytoplasm</keyword>
<keyword id="KW-0413">Isomerase</keyword>
<keyword id="KW-0486">Methionine biosynthesis</keyword>
<keyword id="KW-0539">Nucleus</keyword>
<keyword id="KW-1185">Reference proteome</keyword>
<name>MTNA_UNCRE</name>
<accession>C4JWQ7</accession>
<dbReference type="EC" id="5.3.1.23" evidence="1"/>
<dbReference type="EMBL" id="CH476618">
    <property type="protein sequence ID" value="EEP82134.1"/>
    <property type="molecule type" value="Genomic_DNA"/>
</dbReference>
<dbReference type="RefSeq" id="XP_002584032.1">
    <property type="nucleotide sequence ID" value="XM_002583986.1"/>
</dbReference>
<dbReference type="SMR" id="C4JWQ7"/>
<dbReference type="FunCoup" id="C4JWQ7">
    <property type="interactions" value="638"/>
</dbReference>
<dbReference type="STRING" id="336963.C4JWQ7"/>
<dbReference type="GeneID" id="8442539"/>
<dbReference type="KEGG" id="ure:UREG_06999"/>
<dbReference type="VEuPathDB" id="FungiDB:UREG_06999"/>
<dbReference type="eggNOG" id="KOG1468">
    <property type="taxonomic scope" value="Eukaryota"/>
</dbReference>
<dbReference type="HOGENOM" id="CLU_016218_1_3_1"/>
<dbReference type="InParanoid" id="C4JWQ7"/>
<dbReference type="OMA" id="CETRPLN"/>
<dbReference type="OrthoDB" id="2461at2759"/>
<dbReference type="UniPathway" id="UPA00904">
    <property type="reaction ID" value="UER00874"/>
</dbReference>
<dbReference type="Proteomes" id="UP000002058">
    <property type="component" value="Unassembled WGS sequence"/>
</dbReference>
<dbReference type="GO" id="GO:0005737">
    <property type="term" value="C:cytoplasm"/>
    <property type="evidence" value="ECO:0007669"/>
    <property type="project" value="UniProtKB-SubCell"/>
</dbReference>
<dbReference type="GO" id="GO:0005634">
    <property type="term" value="C:nucleus"/>
    <property type="evidence" value="ECO:0007669"/>
    <property type="project" value="UniProtKB-SubCell"/>
</dbReference>
<dbReference type="GO" id="GO:0046523">
    <property type="term" value="F:S-methyl-5-thioribose-1-phosphate isomerase activity"/>
    <property type="evidence" value="ECO:0007669"/>
    <property type="project" value="UniProtKB-UniRule"/>
</dbReference>
<dbReference type="GO" id="GO:0019509">
    <property type="term" value="P:L-methionine salvage from methylthioadenosine"/>
    <property type="evidence" value="ECO:0007669"/>
    <property type="project" value="UniProtKB-UniRule"/>
</dbReference>
<dbReference type="FunFam" id="1.20.120.420:FF:000003">
    <property type="entry name" value="Methylthioribose-1-phosphate isomerase"/>
    <property type="match status" value="1"/>
</dbReference>
<dbReference type="FunFam" id="3.40.50.10470:FF:000003">
    <property type="entry name" value="Methylthioribose-1-phosphate isomerase"/>
    <property type="match status" value="1"/>
</dbReference>
<dbReference type="Gene3D" id="1.20.120.420">
    <property type="entry name" value="translation initiation factor eif-2b, domain 1"/>
    <property type="match status" value="1"/>
</dbReference>
<dbReference type="Gene3D" id="3.40.50.10470">
    <property type="entry name" value="Translation initiation factor eif-2b, domain 2"/>
    <property type="match status" value="1"/>
</dbReference>
<dbReference type="HAMAP" id="MF_01678">
    <property type="entry name" value="Salvage_MtnA"/>
    <property type="match status" value="1"/>
</dbReference>
<dbReference type="InterPro" id="IPR000649">
    <property type="entry name" value="IF-2B-related"/>
</dbReference>
<dbReference type="InterPro" id="IPR005251">
    <property type="entry name" value="IF-M1Pi"/>
</dbReference>
<dbReference type="InterPro" id="IPR042529">
    <property type="entry name" value="IF_2B-like_C"/>
</dbReference>
<dbReference type="InterPro" id="IPR011559">
    <property type="entry name" value="Initiation_fac_2B_a/b/d"/>
</dbReference>
<dbReference type="InterPro" id="IPR027363">
    <property type="entry name" value="M1Pi_N"/>
</dbReference>
<dbReference type="InterPro" id="IPR037171">
    <property type="entry name" value="NagB/RpiA_transferase-like"/>
</dbReference>
<dbReference type="NCBIfam" id="TIGR00524">
    <property type="entry name" value="eIF-2B_rel"/>
    <property type="match status" value="1"/>
</dbReference>
<dbReference type="NCBIfam" id="NF004326">
    <property type="entry name" value="PRK05720.1"/>
    <property type="match status" value="1"/>
</dbReference>
<dbReference type="NCBIfam" id="TIGR00512">
    <property type="entry name" value="salvage_mtnA"/>
    <property type="match status" value="1"/>
</dbReference>
<dbReference type="PANTHER" id="PTHR43475">
    <property type="entry name" value="METHYLTHIORIBOSE-1-PHOSPHATE ISOMERASE"/>
    <property type="match status" value="1"/>
</dbReference>
<dbReference type="PANTHER" id="PTHR43475:SF1">
    <property type="entry name" value="METHYLTHIORIBOSE-1-PHOSPHATE ISOMERASE"/>
    <property type="match status" value="1"/>
</dbReference>
<dbReference type="Pfam" id="PF01008">
    <property type="entry name" value="IF-2B"/>
    <property type="match status" value="1"/>
</dbReference>
<dbReference type="SUPFAM" id="SSF100950">
    <property type="entry name" value="NagB/RpiA/CoA transferase-like"/>
    <property type="match status" value="1"/>
</dbReference>
<organism>
    <name type="scientific">Uncinocarpus reesii (strain UAMH 1704)</name>
    <dbReference type="NCBI Taxonomy" id="336963"/>
    <lineage>
        <taxon>Eukaryota</taxon>
        <taxon>Fungi</taxon>
        <taxon>Dikarya</taxon>
        <taxon>Ascomycota</taxon>
        <taxon>Pezizomycotina</taxon>
        <taxon>Eurotiomycetes</taxon>
        <taxon>Eurotiomycetidae</taxon>
        <taxon>Onygenales</taxon>
        <taxon>Onygenaceae</taxon>
        <taxon>Uncinocarpus</taxon>
    </lineage>
</organism>